<organism>
    <name type="scientific">Psychrobacter arcticus (strain DSM 17307 / VKM B-2377 / 273-4)</name>
    <dbReference type="NCBI Taxonomy" id="259536"/>
    <lineage>
        <taxon>Bacteria</taxon>
        <taxon>Pseudomonadati</taxon>
        <taxon>Pseudomonadota</taxon>
        <taxon>Gammaproteobacteria</taxon>
        <taxon>Moraxellales</taxon>
        <taxon>Moraxellaceae</taxon>
        <taxon>Psychrobacter</taxon>
    </lineage>
</organism>
<sequence length="349" mass="36807">MSNKPSLSYKDAGVDIDAGDALVQRIKSVAKATSRPEVVGGLGGFGALCRIPTGYTSPLLVSGTDGVGTKLKLALQLNRHDTIGIDLVAMCVNDLLVCGAEPLFFLDYYATGKLDVDVAATVVTGIGEGCKLSNCALIGGETAEMPGMYQDDDYDLAGFCVGVVEEAEVITGENVTEGDVLIALASSGAHSNGYSLVRKVIEVSGVDVTSSNEQLDGQSIQDALMAPTRIYVKAIKALQDTLGSSALHAMSHITGGGLTDNLPRVLPDHLAASIDTSSWQFSELFTWLQTQGNIEQSEMYRTFNCGVGFVIVVPKDKADAAIKTLTDAGEKAWKLGEMVSREADAVVYR</sequence>
<dbReference type="EC" id="6.3.3.1" evidence="1"/>
<dbReference type="EMBL" id="CP000082">
    <property type="protein sequence ID" value="AAZ19472.1"/>
    <property type="molecule type" value="Genomic_DNA"/>
</dbReference>
<dbReference type="RefSeq" id="WP_011280888.1">
    <property type="nucleotide sequence ID" value="NC_007204.1"/>
</dbReference>
<dbReference type="SMR" id="Q4FR86"/>
<dbReference type="STRING" id="259536.Psyc_1624"/>
<dbReference type="KEGG" id="par:Psyc_1624"/>
<dbReference type="eggNOG" id="COG0150">
    <property type="taxonomic scope" value="Bacteria"/>
</dbReference>
<dbReference type="HOGENOM" id="CLU_047116_0_0_6"/>
<dbReference type="OrthoDB" id="9777881at2"/>
<dbReference type="UniPathway" id="UPA00074">
    <property type="reaction ID" value="UER00129"/>
</dbReference>
<dbReference type="Proteomes" id="UP000000546">
    <property type="component" value="Chromosome"/>
</dbReference>
<dbReference type="GO" id="GO:0005829">
    <property type="term" value="C:cytosol"/>
    <property type="evidence" value="ECO:0007669"/>
    <property type="project" value="TreeGrafter"/>
</dbReference>
<dbReference type="GO" id="GO:0005524">
    <property type="term" value="F:ATP binding"/>
    <property type="evidence" value="ECO:0007669"/>
    <property type="project" value="UniProtKB-KW"/>
</dbReference>
<dbReference type="GO" id="GO:0004637">
    <property type="term" value="F:phosphoribosylamine-glycine ligase activity"/>
    <property type="evidence" value="ECO:0007669"/>
    <property type="project" value="TreeGrafter"/>
</dbReference>
<dbReference type="GO" id="GO:0004641">
    <property type="term" value="F:phosphoribosylformylglycinamidine cyclo-ligase activity"/>
    <property type="evidence" value="ECO:0007669"/>
    <property type="project" value="UniProtKB-UniRule"/>
</dbReference>
<dbReference type="GO" id="GO:0006189">
    <property type="term" value="P:'de novo' IMP biosynthetic process"/>
    <property type="evidence" value="ECO:0007669"/>
    <property type="project" value="UniProtKB-UniRule"/>
</dbReference>
<dbReference type="GO" id="GO:0046084">
    <property type="term" value="P:adenine biosynthetic process"/>
    <property type="evidence" value="ECO:0007669"/>
    <property type="project" value="TreeGrafter"/>
</dbReference>
<dbReference type="CDD" id="cd02196">
    <property type="entry name" value="PurM"/>
    <property type="match status" value="1"/>
</dbReference>
<dbReference type="FunFam" id="3.30.1330.10:FF:000001">
    <property type="entry name" value="Phosphoribosylformylglycinamidine cyclo-ligase"/>
    <property type="match status" value="1"/>
</dbReference>
<dbReference type="FunFam" id="3.90.650.10:FF:000001">
    <property type="entry name" value="Phosphoribosylformylglycinamidine cyclo-ligase"/>
    <property type="match status" value="1"/>
</dbReference>
<dbReference type="Gene3D" id="3.90.650.10">
    <property type="entry name" value="PurM-like C-terminal domain"/>
    <property type="match status" value="1"/>
</dbReference>
<dbReference type="Gene3D" id="3.30.1330.10">
    <property type="entry name" value="PurM-like, N-terminal domain"/>
    <property type="match status" value="1"/>
</dbReference>
<dbReference type="HAMAP" id="MF_00741">
    <property type="entry name" value="AIRS"/>
    <property type="match status" value="1"/>
</dbReference>
<dbReference type="InterPro" id="IPR010918">
    <property type="entry name" value="PurM-like_C_dom"/>
</dbReference>
<dbReference type="InterPro" id="IPR036676">
    <property type="entry name" value="PurM-like_C_sf"/>
</dbReference>
<dbReference type="InterPro" id="IPR016188">
    <property type="entry name" value="PurM-like_N"/>
</dbReference>
<dbReference type="InterPro" id="IPR036921">
    <property type="entry name" value="PurM-like_N_sf"/>
</dbReference>
<dbReference type="InterPro" id="IPR004733">
    <property type="entry name" value="PurM_cligase"/>
</dbReference>
<dbReference type="NCBIfam" id="TIGR00878">
    <property type="entry name" value="purM"/>
    <property type="match status" value="1"/>
</dbReference>
<dbReference type="PANTHER" id="PTHR10520:SF12">
    <property type="entry name" value="TRIFUNCTIONAL PURINE BIOSYNTHETIC PROTEIN ADENOSINE-3"/>
    <property type="match status" value="1"/>
</dbReference>
<dbReference type="PANTHER" id="PTHR10520">
    <property type="entry name" value="TRIFUNCTIONAL PURINE BIOSYNTHETIC PROTEIN ADENOSINE-3-RELATED"/>
    <property type="match status" value="1"/>
</dbReference>
<dbReference type="Pfam" id="PF00586">
    <property type="entry name" value="AIRS"/>
    <property type="match status" value="1"/>
</dbReference>
<dbReference type="Pfam" id="PF02769">
    <property type="entry name" value="AIRS_C"/>
    <property type="match status" value="1"/>
</dbReference>
<dbReference type="SUPFAM" id="SSF56042">
    <property type="entry name" value="PurM C-terminal domain-like"/>
    <property type="match status" value="1"/>
</dbReference>
<dbReference type="SUPFAM" id="SSF55326">
    <property type="entry name" value="PurM N-terminal domain-like"/>
    <property type="match status" value="1"/>
</dbReference>
<name>PUR5_PSYA2</name>
<keyword id="KW-0067">ATP-binding</keyword>
<keyword id="KW-0963">Cytoplasm</keyword>
<keyword id="KW-0436">Ligase</keyword>
<keyword id="KW-0547">Nucleotide-binding</keyword>
<keyword id="KW-0658">Purine biosynthesis</keyword>
<keyword id="KW-1185">Reference proteome</keyword>
<gene>
    <name evidence="1" type="primary">purM</name>
    <name type="ordered locus">Psyc_1624</name>
</gene>
<evidence type="ECO:0000255" key="1">
    <source>
        <dbReference type="HAMAP-Rule" id="MF_00741"/>
    </source>
</evidence>
<feature type="chain" id="PRO_0000258387" description="Phosphoribosylformylglycinamidine cyclo-ligase">
    <location>
        <begin position="1"/>
        <end position="349"/>
    </location>
</feature>
<comment type="catalytic activity">
    <reaction evidence="1">
        <text>2-formamido-N(1)-(5-O-phospho-beta-D-ribosyl)acetamidine + ATP = 5-amino-1-(5-phospho-beta-D-ribosyl)imidazole + ADP + phosphate + H(+)</text>
        <dbReference type="Rhea" id="RHEA:23032"/>
        <dbReference type="ChEBI" id="CHEBI:15378"/>
        <dbReference type="ChEBI" id="CHEBI:30616"/>
        <dbReference type="ChEBI" id="CHEBI:43474"/>
        <dbReference type="ChEBI" id="CHEBI:137981"/>
        <dbReference type="ChEBI" id="CHEBI:147287"/>
        <dbReference type="ChEBI" id="CHEBI:456216"/>
        <dbReference type="EC" id="6.3.3.1"/>
    </reaction>
</comment>
<comment type="pathway">
    <text evidence="1">Purine metabolism; IMP biosynthesis via de novo pathway; 5-amino-1-(5-phospho-D-ribosyl)imidazole from N(2)-formyl-N(1)-(5-phospho-D-ribosyl)glycinamide: step 2/2.</text>
</comment>
<comment type="subcellular location">
    <subcellularLocation>
        <location evidence="1">Cytoplasm</location>
    </subcellularLocation>
</comment>
<comment type="similarity">
    <text evidence="1">Belongs to the AIR synthase family.</text>
</comment>
<protein>
    <recommendedName>
        <fullName evidence="1">Phosphoribosylformylglycinamidine cyclo-ligase</fullName>
        <ecNumber evidence="1">6.3.3.1</ecNumber>
    </recommendedName>
    <alternativeName>
        <fullName evidence="1">AIR synthase</fullName>
    </alternativeName>
    <alternativeName>
        <fullName evidence="1">AIRS</fullName>
    </alternativeName>
    <alternativeName>
        <fullName evidence="1">Phosphoribosyl-aminoimidazole synthetase</fullName>
    </alternativeName>
</protein>
<reference key="1">
    <citation type="journal article" date="2010" name="Appl. Environ. Microbiol.">
        <title>The genome sequence of Psychrobacter arcticus 273-4, a psychroactive Siberian permafrost bacterium, reveals mechanisms for adaptation to low-temperature growth.</title>
        <authorList>
            <person name="Ayala-del-Rio H.L."/>
            <person name="Chain P.S."/>
            <person name="Grzymski J.J."/>
            <person name="Ponder M.A."/>
            <person name="Ivanova N."/>
            <person name="Bergholz P.W."/>
            <person name="Di Bartolo G."/>
            <person name="Hauser L."/>
            <person name="Land M."/>
            <person name="Bakermans C."/>
            <person name="Rodrigues D."/>
            <person name="Klappenbach J."/>
            <person name="Zarka D."/>
            <person name="Larimer F."/>
            <person name="Richardson P."/>
            <person name="Murray A."/>
            <person name="Thomashow M."/>
            <person name="Tiedje J.M."/>
        </authorList>
    </citation>
    <scope>NUCLEOTIDE SEQUENCE [LARGE SCALE GENOMIC DNA]</scope>
    <source>
        <strain>DSM 17307 / VKM B-2377 / 273-4</strain>
    </source>
</reference>
<accession>Q4FR86</accession>
<proteinExistence type="inferred from homology"/>